<keyword id="KW-0238">DNA-binding</keyword>
<keyword id="KW-0804">Transcription</keyword>
<keyword id="KW-0805">Transcription regulation</keyword>
<feature type="chain" id="PRO_0000326598" description="Transcription factor E">
    <location>
        <begin position="1"/>
        <end position="173"/>
    </location>
</feature>
<feature type="domain" description="HTH TFE/IIEalpha-type" evidence="1">
    <location>
        <begin position="3"/>
        <end position="88"/>
    </location>
</feature>
<comment type="function">
    <text evidence="1">Transcription factor that plays a role in the activation of archaeal genes transcribed by RNA polymerase. Facilitates transcription initiation by enhancing TATA-box recognition by TATA-box-binding protein (Tbp), and transcription factor B (Tfb) and RNA polymerase recruitment. Not absolutely required for transcription in vitro, but particularly important in cases where Tbp or Tfb function is not optimal. It dynamically alters the nucleic acid-binding properties of RNA polymerases by stabilizing the initiation complex and destabilizing elongation complexes. Seems to translocate with the RNA polymerase following initiation and acts by binding to the non template strand of the transcription bubble in elongation complexes.</text>
</comment>
<comment type="subunit">
    <text evidence="1">Monomer. Interaction with RNA polymerase subunits RpoF and RpoE is necessary for Tfe stimulatory transcription activity. Able to interact with Tbp and RNA polymerase in the absence of DNA promoter. Interacts both with the preinitiation and elongation complexes.</text>
</comment>
<comment type="domain">
    <text evidence="1">The winged helix domain is involved in binding to DNA in the preinitiation complex.</text>
</comment>
<comment type="similarity">
    <text evidence="1">Belongs to the TFE family.</text>
</comment>
<comment type="sequence caution" evidence="2">
    <conflict type="erroneous initiation">
        <sequence resource="EMBL-CDS" id="ABR56727"/>
    </conflict>
</comment>
<reference key="1">
    <citation type="submission" date="2007-06" db="EMBL/GenBank/DDBJ databases">
        <title>Complete sequence of Methanococcus aeolicus Nankai-3.</title>
        <authorList>
            <consortium name="US DOE Joint Genome Institute"/>
            <person name="Copeland A."/>
            <person name="Lucas S."/>
            <person name="Lapidus A."/>
            <person name="Barry K."/>
            <person name="Glavina del Rio T."/>
            <person name="Dalin E."/>
            <person name="Tice H."/>
            <person name="Pitluck S."/>
            <person name="Chain P."/>
            <person name="Malfatti S."/>
            <person name="Shin M."/>
            <person name="Vergez L."/>
            <person name="Schmutz J."/>
            <person name="Larimer F."/>
            <person name="Land M."/>
            <person name="Hauser L."/>
            <person name="Kyrpides N."/>
            <person name="Lykidis A."/>
            <person name="Sieprawska-Lupa M."/>
            <person name="Whitman W.B."/>
            <person name="Richardson P."/>
        </authorList>
    </citation>
    <scope>NUCLEOTIDE SEQUENCE [LARGE SCALE GENOMIC DNA]</scope>
    <source>
        <strain>ATCC BAA-1280 / DSM 17508 / OCM 812 / Nankai-3</strain>
    </source>
</reference>
<dbReference type="EMBL" id="CP000743">
    <property type="protein sequence ID" value="ABR56727.1"/>
    <property type="status" value="ALT_INIT"/>
    <property type="molecule type" value="Genomic_DNA"/>
</dbReference>
<dbReference type="RefSeq" id="WP_011973859.1">
    <property type="nucleotide sequence ID" value="NC_009635.1"/>
</dbReference>
<dbReference type="SMR" id="A6UW55"/>
<dbReference type="STRING" id="419665.Maeo_1150"/>
<dbReference type="GeneID" id="75304599"/>
<dbReference type="KEGG" id="mae:Maeo_1150"/>
<dbReference type="eggNOG" id="arCOG04270">
    <property type="taxonomic scope" value="Archaea"/>
</dbReference>
<dbReference type="HOGENOM" id="CLU_100097_0_0_2"/>
<dbReference type="OrthoDB" id="5935at2157"/>
<dbReference type="Proteomes" id="UP000001106">
    <property type="component" value="Chromosome"/>
</dbReference>
<dbReference type="GO" id="GO:0003677">
    <property type="term" value="F:DNA binding"/>
    <property type="evidence" value="ECO:0007669"/>
    <property type="project" value="UniProtKB-KW"/>
</dbReference>
<dbReference type="GO" id="GO:0006355">
    <property type="term" value="P:regulation of DNA-templated transcription"/>
    <property type="evidence" value="ECO:0007669"/>
    <property type="project" value="InterPro"/>
</dbReference>
<dbReference type="GO" id="GO:0006367">
    <property type="term" value="P:transcription initiation at RNA polymerase II promoter"/>
    <property type="evidence" value="ECO:0007669"/>
    <property type="project" value="InterPro"/>
</dbReference>
<dbReference type="Gene3D" id="1.10.10.10">
    <property type="entry name" value="Winged helix-like DNA-binding domain superfamily/Winged helix DNA-binding domain"/>
    <property type="match status" value="1"/>
</dbReference>
<dbReference type="HAMAP" id="MF_01909">
    <property type="entry name" value="TFE_arch"/>
    <property type="match status" value="1"/>
</dbReference>
<dbReference type="InterPro" id="IPR016481">
    <property type="entry name" value="TF_E_archaea"/>
</dbReference>
<dbReference type="InterPro" id="IPR039997">
    <property type="entry name" value="TFE"/>
</dbReference>
<dbReference type="InterPro" id="IPR017919">
    <property type="entry name" value="TFIIE/TFIIEa_HTH"/>
</dbReference>
<dbReference type="InterPro" id="IPR002853">
    <property type="entry name" value="TFIIE_asu"/>
</dbReference>
<dbReference type="InterPro" id="IPR024550">
    <property type="entry name" value="TFIIEa/SarR/Rpc3_HTH_dom"/>
</dbReference>
<dbReference type="InterPro" id="IPR036388">
    <property type="entry name" value="WH-like_DNA-bd_sf"/>
</dbReference>
<dbReference type="InterPro" id="IPR036390">
    <property type="entry name" value="WH_DNA-bd_sf"/>
</dbReference>
<dbReference type="NCBIfam" id="NF004910">
    <property type="entry name" value="PRK06266.1"/>
    <property type="match status" value="1"/>
</dbReference>
<dbReference type="NCBIfam" id="TIGR00373">
    <property type="entry name" value="transcription factor E"/>
    <property type="match status" value="1"/>
</dbReference>
<dbReference type="PANTHER" id="PTHR13097:SF7">
    <property type="entry name" value="GENERAL TRANSCRIPTION FACTOR IIE SUBUNIT 1"/>
    <property type="match status" value="1"/>
</dbReference>
<dbReference type="PANTHER" id="PTHR13097">
    <property type="entry name" value="TRANSCRIPTION INITIATION FACTOR IIE, ALPHA SUBUNIT"/>
    <property type="match status" value="1"/>
</dbReference>
<dbReference type="Pfam" id="PF02002">
    <property type="entry name" value="TFIIE_alpha"/>
    <property type="match status" value="1"/>
</dbReference>
<dbReference type="PIRSF" id="PIRSF006373">
    <property type="entry name" value="TF_E_archaea"/>
    <property type="match status" value="1"/>
</dbReference>
<dbReference type="SMART" id="SM00531">
    <property type="entry name" value="TFIIE"/>
    <property type="match status" value="1"/>
</dbReference>
<dbReference type="SUPFAM" id="SSF46785">
    <property type="entry name" value="Winged helix' DNA-binding domain"/>
    <property type="match status" value="1"/>
</dbReference>
<dbReference type="PROSITE" id="PS51344">
    <property type="entry name" value="HTH_TFE_IIE"/>
    <property type="match status" value="1"/>
</dbReference>
<proteinExistence type="inferred from homology"/>
<protein>
    <recommendedName>
        <fullName evidence="1">Transcription factor E</fullName>
        <shortName evidence="1">TFE</shortName>
    </recommendedName>
    <alternativeName>
        <fullName evidence="1">TFIIE subunit alpha homolog</fullName>
    </alternativeName>
    <alternativeName>
        <fullName evidence="1">Transcription initiation factor TFIIE</fullName>
    </alternativeName>
</protein>
<evidence type="ECO:0000255" key="1">
    <source>
        <dbReference type="HAMAP-Rule" id="MF_01909"/>
    </source>
</evidence>
<evidence type="ECO:0000305" key="2"/>
<sequence length="173" mass="20541">MLNNPIIQQVLLEILGDDINGFNVLEALTELTEVTDDEISRQLDLKLNTVRKLLYKLYDARLVDYNREKDEETNWYSYTWRATFTKLPGVVKKRMEQLLIDLKEQLEVEENTLFFYCPRCEFKYSFDEAIDYGFRCSQCNGVLKEYNNKNDILMIKNQIKIIEEELALNPLFS</sequence>
<organism>
    <name type="scientific">Methanococcus aeolicus (strain ATCC BAA-1280 / DSM 17508 / OCM 812 / Nankai-3)</name>
    <dbReference type="NCBI Taxonomy" id="419665"/>
    <lineage>
        <taxon>Archaea</taxon>
        <taxon>Methanobacteriati</taxon>
        <taxon>Methanobacteriota</taxon>
        <taxon>Methanomada group</taxon>
        <taxon>Methanococci</taxon>
        <taxon>Methanococcales</taxon>
        <taxon>Methanococcaceae</taxon>
        <taxon>Methanococcus</taxon>
    </lineage>
</organism>
<gene>
    <name evidence="1" type="primary">tfe</name>
    <name type="ordered locus">Maeo_1150</name>
</gene>
<accession>A6UW55</accession>
<name>TFE_META3</name>